<protein>
    <recommendedName>
        <fullName evidence="1">Proteasome-activating nucleotidase</fullName>
        <shortName evidence="1">PAN</shortName>
    </recommendedName>
    <alternativeName>
        <fullName evidence="1">Proteasomal ATPase</fullName>
    </alternativeName>
    <alternativeName>
        <fullName evidence="1">Proteasome regulatory ATPase</fullName>
    </alternativeName>
    <alternativeName>
        <fullName evidence="1">Proteasome regulatory particle</fullName>
    </alternativeName>
</protein>
<feature type="chain" id="PRO_1000146686" description="Proteasome-activating nucleotidase">
    <location>
        <begin position="1"/>
        <end position="412"/>
    </location>
</feature>
<feature type="region of interest" description="Docks into pockets in the proteasome alpha-ring to cause gate opening" evidence="1">
    <location>
        <begin position="410"/>
        <end position="412"/>
    </location>
</feature>
<feature type="coiled-coil region" evidence="1">
    <location>
        <begin position="15"/>
        <end position="72"/>
    </location>
</feature>
<feature type="binding site" evidence="1">
    <location>
        <begin position="197"/>
        <end position="202"/>
    </location>
    <ligand>
        <name>ATP</name>
        <dbReference type="ChEBI" id="CHEBI:30616"/>
    </ligand>
</feature>
<feature type="binding site" evidence="1">
    <location>
        <position position="336"/>
    </location>
    <ligand>
        <name>ATP</name>
        <dbReference type="ChEBI" id="CHEBI:30616"/>
    </ligand>
</feature>
<accession>B8GGN4</accession>
<sequence length="412" mass="46506">MADTLNHLPEPQKGEDLYRYLLERVTNLEDRNTELREQLRQIEADKRYLETQKVRYEREVRKFKGEIEQMKSPPLVIGTVTDLIDENRVIVRSSAGPRFLVGISQSLNIEEIKPGARCTLNQQSLAIVEILPTNYDAQIYGMEVIEAPSERYEEIGGLEKQINEIREAVELPLKKPEVFRKMGIEPPKGVLLHGPPGTGKTLLARAVAHQTEAHFLRVVGSELVQKYIGEGARLVRELFELAKKKSPSIIFIDEIDAIGASRTESNTSGDREVHRTLMQLLAEMDGFSNRGDVRIIGATNRIDILDRALLRPGRFDRIIEIPAPDIEGRVSILNIHCAGMNIDKKVDIRDIATRTDGKNGADLRSICMEAGMFAIRSDHEMVTLEDFEQSIEKFSNDFERDSLINTSGAMFA</sequence>
<reference key="1">
    <citation type="journal article" date="2015" name="Genome Announc.">
        <title>Complete Genome Sequence of Methanosphaerula palustris E1-9CT, a Hydrogenotrophic Methanogen Isolated from a Minerotrophic Fen Peatland.</title>
        <authorList>
            <person name="Cadillo-Quiroz H."/>
            <person name="Browne P."/>
            <person name="Kyrpides N."/>
            <person name="Woyke T."/>
            <person name="Goodwin L."/>
            <person name="Detter C."/>
            <person name="Yavitt J.B."/>
            <person name="Zinder S.H."/>
        </authorList>
    </citation>
    <scope>NUCLEOTIDE SEQUENCE [LARGE SCALE GENOMIC DNA]</scope>
    <source>
        <strain>ATCC BAA-1556 / DSM 19958 / E1-9c</strain>
    </source>
</reference>
<name>PAN_METPE</name>
<comment type="function">
    <text evidence="1">ATPase which is responsible for recognizing, binding, unfolding and translocation of substrate proteins into the archaeal 20S proteasome core particle. Is essential for opening the gate of the 20S proteasome via an interaction with its C-terminus, thereby allowing substrate entry and access to the site of proteolysis. Thus, the C-termini of the proteasomal ATPase function like a 'key in a lock' to induce gate opening and therefore regulate proteolysis. Unfolding activity requires energy from ATP hydrolysis, whereas ATP binding alone promotes ATPase-20S proteasome association which triggers gate opening, and supports translocation of unfolded substrates.</text>
</comment>
<comment type="subunit">
    <text evidence="1">Homohexamer. The hexameric complex has a two-ring architecture resembling a top hat that caps the 20S proteasome core at one or both ends. Upon ATP-binding, the C-terminus of PAN interacts with the alpha-rings of the proteasome core by binding to the intersubunit pockets.</text>
</comment>
<comment type="subcellular location">
    <subcellularLocation>
        <location evidence="1">Cytoplasm</location>
    </subcellularLocation>
</comment>
<comment type="domain">
    <text evidence="1">Consists of three main regions, an N-terminal coiled-coil domain that may assist in substrate recognition, an interdomain involved in PAN hexamerization, and a C-terminal ATPase domain of the AAA type.</text>
</comment>
<comment type="similarity">
    <text evidence="1">Belongs to the AAA ATPase family.</text>
</comment>
<proteinExistence type="inferred from homology"/>
<gene>
    <name evidence="1" type="primary">pan</name>
    <name type="ordered locus">Mpal_0937</name>
</gene>
<evidence type="ECO:0000255" key="1">
    <source>
        <dbReference type="HAMAP-Rule" id="MF_00553"/>
    </source>
</evidence>
<organism>
    <name type="scientific">Methanosphaerula palustris (strain ATCC BAA-1556 / DSM 19958 / E1-9c)</name>
    <dbReference type="NCBI Taxonomy" id="521011"/>
    <lineage>
        <taxon>Archaea</taxon>
        <taxon>Methanobacteriati</taxon>
        <taxon>Methanobacteriota</taxon>
        <taxon>Stenosarchaea group</taxon>
        <taxon>Methanomicrobia</taxon>
        <taxon>Methanomicrobiales</taxon>
        <taxon>Methanoregulaceae</taxon>
        <taxon>Methanosphaerula</taxon>
    </lineage>
</organism>
<dbReference type="EMBL" id="CP001338">
    <property type="protein sequence ID" value="ACL16289.1"/>
    <property type="molecule type" value="Genomic_DNA"/>
</dbReference>
<dbReference type="RefSeq" id="WP_012617608.1">
    <property type="nucleotide sequence ID" value="NC_011832.1"/>
</dbReference>
<dbReference type="SMR" id="B8GGN4"/>
<dbReference type="STRING" id="521011.Mpal_0937"/>
<dbReference type="GeneID" id="7272430"/>
<dbReference type="KEGG" id="mpl:Mpal_0937"/>
<dbReference type="eggNOG" id="arCOG01306">
    <property type="taxonomic scope" value="Archaea"/>
</dbReference>
<dbReference type="HOGENOM" id="CLU_000688_2_1_2"/>
<dbReference type="OrthoDB" id="77269at2157"/>
<dbReference type="Proteomes" id="UP000002457">
    <property type="component" value="Chromosome"/>
</dbReference>
<dbReference type="GO" id="GO:0005737">
    <property type="term" value="C:cytoplasm"/>
    <property type="evidence" value="ECO:0007669"/>
    <property type="project" value="UniProtKB-SubCell"/>
</dbReference>
<dbReference type="GO" id="GO:0022623">
    <property type="term" value="C:proteasome-activating nucleotidase complex"/>
    <property type="evidence" value="ECO:0007669"/>
    <property type="project" value="UniProtKB-UniRule"/>
</dbReference>
<dbReference type="GO" id="GO:0005524">
    <property type="term" value="F:ATP binding"/>
    <property type="evidence" value="ECO:0007669"/>
    <property type="project" value="UniProtKB-UniRule"/>
</dbReference>
<dbReference type="GO" id="GO:0016887">
    <property type="term" value="F:ATP hydrolysis activity"/>
    <property type="evidence" value="ECO:0007669"/>
    <property type="project" value="UniProtKB-UniRule"/>
</dbReference>
<dbReference type="GO" id="GO:0010498">
    <property type="term" value="P:proteasomal protein catabolic process"/>
    <property type="evidence" value="ECO:0007669"/>
    <property type="project" value="UniProtKB-UniRule"/>
</dbReference>
<dbReference type="GO" id="GO:0043335">
    <property type="term" value="P:protein unfolding"/>
    <property type="evidence" value="ECO:0007669"/>
    <property type="project" value="UniProtKB-UniRule"/>
</dbReference>
<dbReference type="CDD" id="cd19502">
    <property type="entry name" value="RecA-like_PAN_like"/>
    <property type="match status" value="1"/>
</dbReference>
<dbReference type="FunFam" id="3.40.50.300:FF:000030">
    <property type="entry name" value="26S protease regulatory subunit 8"/>
    <property type="match status" value="1"/>
</dbReference>
<dbReference type="Gene3D" id="1.10.8.60">
    <property type="match status" value="1"/>
</dbReference>
<dbReference type="Gene3D" id="2.40.50.140">
    <property type="entry name" value="Nucleic acid-binding proteins"/>
    <property type="match status" value="1"/>
</dbReference>
<dbReference type="Gene3D" id="3.40.50.300">
    <property type="entry name" value="P-loop containing nucleotide triphosphate hydrolases"/>
    <property type="match status" value="1"/>
</dbReference>
<dbReference type="HAMAP" id="MF_00553">
    <property type="entry name" value="PAN"/>
    <property type="match status" value="1"/>
</dbReference>
<dbReference type="InterPro" id="IPR050221">
    <property type="entry name" value="26S_Proteasome_ATPase"/>
</dbReference>
<dbReference type="InterPro" id="IPR003593">
    <property type="entry name" value="AAA+_ATPase"/>
</dbReference>
<dbReference type="InterPro" id="IPR041569">
    <property type="entry name" value="AAA_lid_3"/>
</dbReference>
<dbReference type="InterPro" id="IPR003959">
    <property type="entry name" value="ATPase_AAA_core"/>
</dbReference>
<dbReference type="InterPro" id="IPR003960">
    <property type="entry name" value="ATPase_AAA_CS"/>
</dbReference>
<dbReference type="InterPro" id="IPR012340">
    <property type="entry name" value="NA-bd_OB-fold"/>
</dbReference>
<dbReference type="InterPro" id="IPR023501">
    <property type="entry name" value="Nucleotidase_PAN"/>
</dbReference>
<dbReference type="InterPro" id="IPR027417">
    <property type="entry name" value="P-loop_NTPase"/>
</dbReference>
<dbReference type="InterPro" id="IPR032501">
    <property type="entry name" value="Prot_ATP_ID_OB_2nd"/>
</dbReference>
<dbReference type="NCBIfam" id="NF003069">
    <property type="entry name" value="PRK03992.1"/>
    <property type="match status" value="1"/>
</dbReference>
<dbReference type="NCBIfam" id="TIGR01242">
    <property type="entry name" value="proteasome-activating nucleotidase"/>
    <property type="match status" value="1"/>
</dbReference>
<dbReference type="PANTHER" id="PTHR23073">
    <property type="entry name" value="26S PROTEASOME REGULATORY SUBUNIT"/>
    <property type="match status" value="1"/>
</dbReference>
<dbReference type="Pfam" id="PF00004">
    <property type="entry name" value="AAA"/>
    <property type="match status" value="1"/>
</dbReference>
<dbReference type="Pfam" id="PF17862">
    <property type="entry name" value="AAA_lid_3"/>
    <property type="match status" value="1"/>
</dbReference>
<dbReference type="Pfam" id="PF16450">
    <property type="entry name" value="Prot_ATP_ID_OB_C"/>
    <property type="match status" value="1"/>
</dbReference>
<dbReference type="SMART" id="SM00382">
    <property type="entry name" value="AAA"/>
    <property type="match status" value="1"/>
</dbReference>
<dbReference type="SUPFAM" id="SSF52540">
    <property type="entry name" value="P-loop containing nucleoside triphosphate hydrolases"/>
    <property type="match status" value="1"/>
</dbReference>
<dbReference type="PROSITE" id="PS00674">
    <property type="entry name" value="AAA"/>
    <property type="match status" value="1"/>
</dbReference>
<keyword id="KW-0067">ATP-binding</keyword>
<keyword id="KW-0143">Chaperone</keyword>
<keyword id="KW-0175">Coiled coil</keyword>
<keyword id="KW-0963">Cytoplasm</keyword>
<keyword id="KW-0547">Nucleotide-binding</keyword>
<keyword id="KW-0647">Proteasome</keyword>
<keyword id="KW-1185">Reference proteome</keyword>